<organism>
    <name type="scientific">Pisum sativum</name>
    <name type="common">Garden pea</name>
    <name type="synonym">Lathyrus oleraceus</name>
    <dbReference type="NCBI Taxonomy" id="3888"/>
    <lineage>
        <taxon>Eukaryota</taxon>
        <taxon>Viridiplantae</taxon>
        <taxon>Streptophyta</taxon>
        <taxon>Embryophyta</taxon>
        <taxon>Tracheophyta</taxon>
        <taxon>Spermatophyta</taxon>
        <taxon>Magnoliopsida</taxon>
        <taxon>eudicotyledons</taxon>
        <taxon>Gunneridae</taxon>
        <taxon>Pentapetalae</taxon>
        <taxon>rosids</taxon>
        <taxon>fabids</taxon>
        <taxon>Fabales</taxon>
        <taxon>Fabaceae</taxon>
        <taxon>Papilionoideae</taxon>
        <taxon>50 kb inversion clade</taxon>
        <taxon>NPAAA clade</taxon>
        <taxon>Hologalegina</taxon>
        <taxon>IRL clade</taxon>
        <taxon>Fabeae</taxon>
        <taxon>Pisum</taxon>
    </lineage>
</organism>
<proteinExistence type="inferred from homology"/>
<accession>P31172</accession>
<comment type="function">
    <text evidence="1">Required during biogenesis of c-type cytochromes (cytochrome c6 and cytochrome f) at the step of heme attachment.</text>
</comment>
<comment type="subunit">
    <text evidence="1">May interact with Ccs1.</text>
</comment>
<comment type="subcellular location">
    <subcellularLocation>
        <location evidence="1">Plastid</location>
        <location evidence="1">Chloroplast thylakoid membrane</location>
        <topology evidence="1">Multi-pass membrane protein</topology>
    </subcellularLocation>
</comment>
<comment type="similarity">
    <text evidence="3">Belongs to the CcmF/CycK/Ccl1/NrfE/CcsA family.</text>
</comment>
<gene>
    <name type="primary">ccsA</name>
</gene>
<name>CCSA_PEA</name>
<reference key="1">
    <citation type="journal article" date="1991" name="Plant Mol. Biol.">
        <title>Nucleotide sequence and expression of the ribosomal protein L2 gene in pea chloroplasts.</title>
        <authorList>
            <person name="Nagano Y."/>
            <person name="Ishikawa H."/>
            <person name="Matsuno R."/>
            <person name="Sasaki Y."/>
        </authorList>
    </citation>
    <scope>NUCLEOTIDE SEQUENCE [GENOMIC DNA]</scope>
    <source>
        <strain>cv. Alaska</strain>
    </source>
</reference>
<sequence>DPKETWAFITWTIFAIYLHTRKKKKLEGINSSIVASIGFLIIWICYFGINLLGIGLHSYGSFTSN</sequence>
<evidence type="ECO:0000250" key="1"/>
<evidence type="ECO:0000255" key="2"/>
<evidence type="ECO:0000305" key="3"/>
<protein>
    <recommendedName>
        <fullName>Cytochrome c biogenesis protein CcsA</fullName>
    </recommendedName>
</protein>
<geneLocation type="chloroplast"/>
<feature type="chain" id="PRO_0000201614" description="Cytochrome c biogenesis protein CcsA">
    <location>
        <begin position="1" status="less than"/>
        <end position="65"/>
    </location>
</feature>
<feature type="transmembrane region" description="Helical" evidence="2">
    <location>
        <begin position="5"/>
        <end position="19"/>
    </location>
</feature>
<feature type="transmembrane region" description="Helical" evidence="2">
    <location>
        <begin position="33"/>
        <end position="53"/>
    </location>
</feature>
<feature type="non-terminal residue">
    <location>
        <position position="1"/>
    </location>
</feature>
<keyword id="KW-0150">Chloroplast</keyword>
<keyword id="KW-0201">Cytochrome c-type biogenesis</keyword>
<keyword id="KW-0472">Membrane</keyword>
<keyword id="KW-0934">Plastid</keyword>
<keyword id="KW-0793">Thylakoid</keyword>
<keyword id="KW-0812">Transmembrane</keyword>
<keyword id="KW-1133">Transmembrane helix</keyword>
<dbReference type="EMBL" id="X59015">
    <property type="protein sequence ID" value="CAA41754.1"/>
    <property type="molecule type" value="Genomic_DNA"/>
</dbReference>
<dbReference type="PIR" id="S17441">
    <property type="entry name" value="S17441"/>
</dbReference>
<dbReference type="SMR" id="P31172"/>
<dbReference type="GO" id="GO:0009535">
    <property type="term" value="C:chloroplast thylakoid membrane"/>
    <property type="evidence" value="ECO:0007669"/>
    <property type="project" value="UniProtKB-SubCell"/>
</dbReference>
<dbReference type="GO" id="GO:0005886">
    <property type="term" value="C:plasma membrane"/>
    <property type="evidence" value="ECO:0007669"/>
    <property type="project" value="TreeGrafter"/>
</dbReference>
<dbReference type="GO" id="GO:0020037">
    <property type="term" value="F:heme binding"/>
    <property type="evidence" value="ECO:0007669"/>
    <property type="project" value="InterPro"/>
</dbReference>
<dbReference type="GO" id="GO:0017004">
    <property type="term" value="P:cytochrome complex assembly"/>
    <property type="evidence" value="ECO:0007669"/>
    <property type="project" value="UniProtKB-KW"/>
</dbReference>
<dbReference type="InterPro" id="IPR002541">
    <property type="entry name" value="Cyt_c_assembly"/>
</dbReference>
<dbReference type="InterPro" id="IPR045062">
    <property type="entry name" value="Cyt_c_biogenesis_CcsA/CcmC"/>
</dbReference>
<dbReference type="PANTHER" id="PTHR30071:SF1">
    <property type="entry name" value="CYTOCHROME B_B6 PROTEIN-RELATED"/>
    <property type="match status" value="1"/>
</dbReference>
<dbReference type="PANTHER" id="PTHR30071">
    <property type="entry name" value="HEME EXPORTER PROTEIN C"/>
    <property type="match status" value="1"/>
</dbReference>
<dbReference type="Pfam" id="PF01578">
    <property type="entry name" value="Cytochrom_C_asm"/>
    <property type="match status" value="1"/>
</dbReference>